<reference key="1">
    <citation type="journal article" date="2007" name="Nat. Biotechnol.">
        <title>Genome sequence and identification of candidate vaccine antigens from the animal pathogen Dichelobacter nodosus.</title>
        <authorList>
            <person name="Myers G.S.A."/>
            <person name="Parker D."/>
            <person name="Al-Hasani K."/>
            <person name="Kennan R.M."/>
            <person name="Seemann T."/>
            <person name="Ren Q."/>
            <person name="Badger J.H."/>
            <person name="Selengut J.D."/>
            <person name="Deboy R.T."/>
            <person name="Tettelin H."/>
            <person name="Boyce J.D."/>
            <person name="McCarl V.P."/>
            <person name="Han X."/>
            <person name="Nelson W.C."/>
            <person name="Madupu R."/>
            <person name="Mohamoud Y."/>
            <person name="Holley T."/>
            <person name="Fedorova N."/>
            <person name="Khouri H."/>
            <person name="Bottomley S.P."/>
            <person name="Whittington R.J."/>
            <person name="Adler B."/>
            <person name="Songer J.G."/>
            <person name="Rood J.I."/>
            <person name="Paulsen I.T."/>
        </authorList>
    </citation>
    <scope>NUCLEOTIDE SEQUENCE [LARGE SCALE GENOMIC DNA]</scope>
    <source>
        <strain>VCS1703A</strain>
    </source>
</reference>
<dbReference type="EMBL" id="CP000513">
    <property type="protein sequence ID" value="ABQ14243.1"/>
    <property type="molecule type" value="Genomic_DNA"/>
</dbReference>
<dbReference type="RefSeq" id="WP_012031148.1">
    <property type="nucleotide sequence ID" value="NC_009446.1"/>
</dbReference>
<dbReference type="SMR" id="A5EYG2"/>
<dbReference type="STRING" id="246195.DNO_0825"/>
<dbReference type="KEGG" id="dno:DNO_0825"/>
<dbReference type="eggNOG" id="COG0576">
    <property type="taxonomic scope" value="Bacteria"/>
</dbReference>
<dbReference type="HOGENOM" id="CLU_057217_6_0_6"/>
<dbReference type="OrthoDB" id="9789811at2"/>
<dbReference type="Proteomes" id="UP000000248">
    <property type="component" value="Chromosome"/>
</dbReference>
<dbReference type="GO" id="GO:0005829">
    <property type="term" value="C:cytosol"/>
    <property type="evidence" value="ECO:0007669"/>
    <property type="project" value="TreeGrafter"/>
</dbReference>
<dbReference type="GO" id="GO:0000774">
    <property type="term" value="F:adenyl-nucleotide exchange factor activity"/>
    <property type="evidence" value="ECO:0007669"/>
    <property type="project" value="InterPro"/>
</dbReference>
<dbReference type="GO" id="GO:0042803">
    <property type="term" value="F:protein homodimerization activity"/>
    <property type="evidence" value="ECO:0007669"/>
    <property type="project" value="InterPro"/>
</dbReference>
<dbReference type="GO" id="GO:0051087">
    <property type="term" value="F:protein-folding chaperone binding"/>
    <property type="evidence" value="ECO:0007669"/>
    <property type="project" value="InterPro"/>
</dbReference>
<dbReference type="GO" id="GO:0051082">
    <property type="term" value="F:unfolded protein binding"/>
    <property type="evidence" value="ECO:0007669"/>
    <property type="project" value="TreeGrafter"/>
</dbReference>
<dbReference type="GO" id="GO:0006457">
    <property type="term" value="P:protein folding"/>
    <property type="evidence" value="ECO:0007669"/>
    <property type="project" value="InterPro"/>
</dbReference>
<dbReference type="CDD" id="cd00446">
    <property type="entry name" value="GrpE"/>
    <property type="match status" value="1"/>
</dbReference>
<dbReference type="FunFam" id="2.30.22.10:FF:000001">
    <property type="entry name" value="Protein GrpE"/>
    <property type="match status" value="1"/>
</dbReference>
<dbReference type="Gene3D" id="3.90.20.20">
    <property type="match status" value="1"/>
</dbReference>
<dbReference type="Gene3D" id="2.30.22.10">
    <property type="entry name" value="Head domain of nucleotide exchange factor GrpE"/>
    <property type="match status" value="1"/>
</dbReference>
<dbReference type="HAMAP" id="MF_01151">
    <property type="entry name" value="GrpE"/>
    <property type="match status" value="1"/>
</dbReference>
<dbReference type="InterPro" id="IPR000740">
    <property type="entry name" value="GrpE"/>
</dbReference>
<dbReference type="InterPro" id="IPR013805">
    <property type="entry name" value="GrpE_coiled_coil"/>
</dbReference>
<dbReference type="InterPro" id="IPR009012">
    <property type="entry name" value="GrpE_head"/>
</dbReference>
<dbReference type="NCBIfam" id="NF010748">
    <property type="entry name" value="PRK14150.1"/>
    <property type="match status" value="1"/>
</dbReference>
<dbReference type="PANTHER" id="PTHR21237">
    <property type="entry name" value="GRPE PROTEIN"/>
    <property type="match status" value="1"/>
</dbReference>
<dbReference type="PANTHER" id="PTHR21237:SF23">
    <property type="entry name" value="GRPE PROTEIN HOMOLOG, MITOCHONDRIAL"/>
    <property type="match status" value="1"/>
</dbReference>
<dbReference type="Pfam" id="PF01025">
    <property type="entry name" value="GrpE"/>
    <property type="match status" value="1"/>
</dbReference>
<dbReference type="PRINTS" id="PR00773">
    <property type="entry name" value="GRPEPROTEIN"/>
</dbReference>
<dbReference type="SUPFAM" id="SSF58014">
    <property type="entry name" value="Coiled-coil domain of nucleotide exchange factor GrpE"/>
    <property type="match status" value="1"/>
</dbReference>
<dbReference type="SUPFAM" id="SSF51064">
    <property type="entry name" value="Head domain of nucleotide exchange factor GrpE"/>
    <property type="match status" value="1"/>
</dbReference>
<dbReference type="PROSITE" id="PS01071">
    <property type="entry name" value="GRPE"/>
    <property type="match status" value="1"/>
</dbReference>
<keyword id="KW-0143">Chaperone</keyword>
<keyword id="KW-0963">Cytoplasm</keyword>
<keyword id="KW-1185">Reference proteome</keyword>
<keyword id="KW-0346">Stress response</keyword>
<evidence type="ECO:0000255" key="1">
    <source>
        <dbReference type="HAMAP-Rule" id="MF_01151"/>
    </source>
</evidence>
<evidence type="ECO:0000256" key="2">
    <source>
        <dbReference type="SAM" id="MobiDB-lite"/>
    </source>
</evidence>
<organism>
    <name type="scientific">Dichelobacter nodosus (strain VCS1703A)</name>
    <dbReference type="NCBI Taxonomy" id="246195"/>
    <lineage>
        <taxon>Bacteria</taxon>
        <taxon>Pseudomonadati</taxon>
        <taxon>Pseudomonadota</taxon>
        <taxon>Gammaproteobacteria</taxon>
        <taxon>Cardiobacteriales</taxon>
        <taxon>Cardiobacteriaceae</taxon>
        <taxon>Dichelobacter</taxon>
    </lineage>
</organism>
<gene>
    <name evidence="1" type="primary">grpE</name>
    <name type="ordered locus">DNO_0825</name>
</gene>
<sequence length="187" mass="21266">MHDPKESLETNIQETESQEKLPETPIIEEEPILTLPDDQINQLQQEVAELKDQLIWQKAENENLRKRQARELENAYKFASERLLKDLLPVIDSLNLGLQAALDTENEAVKQFITGSEMTLTMFQETLARHGIEEINPVGEKFNPELHEAVTMTPSEAHEPNTVIQVTQKGYLLNGRTVRAAQVIVSK</sequence>
<comment type="function">
    <text evidence="1">Participates actively in the response to hyperosmotic and heat shock by preventing the aggregation of stress-denatured proteins, in association with DnaK and GrpE. It is the nucleotide exchange factor for DnaK and may function as a thermosensor. Unfolded proteins bind initially to DnaJ; upon interaction with the DnaJ-bound protein, DnaK hydrolyzes its bound ATP, resulting in the formation of a stable complex. GrpE releases ADP from DnaK; ATP binding to DnaK triggers the release of the substrate protein, thus completing the reaction cycle. Several rounds of ATP-dependent interactions between DnaJ, DnaK and GrpE are required for fully efficient folding.</text>
</comment>
<comment type="subunit">
    <text evidence="1">Homodimer.</text>
</comment>
<comment type="subcellular location">
    <subcellularLocation>
        <location evidence="1">Cytoplasm</location>
    </subcellularLocation>
</comment>
<comment type="similarity">
    <text evidence="1">Belongs to the GrpE family.</text>
</comment>
<protein>
    <recommendedName>
        <fullName evidence="1">Protein GrpE</fullName>
    </recommendedName>
    <alternativeName>
        <fullName evidence="1">HSP-70 cofactor</fullName>
    </alternativeName>
</protein>
<proteinExistence type="inferred from homology"/>
<feature type="chain" id="PRO_1000053574" description="Protein GrpE">
    <location>
        <begin position="1"/>
        <end position="187"/>
    </location>
</feature>
<feature type="region of interest" description="Disordered" evidence="2">
    <location>
        <begin position="1"/>
        <end position="26"/>
    </location>
</feature>
<accession>A5EYG2</accession>
<name>GRPE_DICNV</name>